<sequence length="49" mass="5873">MRVNVTLACTECGDRNYITTKNKRNNPERVEMKKFCSRENKQTLHRETK</sequence>
<proteinExistence type="inferred from homology"/>
<gene>
    <name evidence="1" type="primary">rpmG3</name>
    <name type="ordered locus">NWMN_1454</name>
</gene>
<dbReference type="EMBL" id="AP009351">
    <property type="protein sequence ID" value="BAF67726.1"/>
    <property type="molecule type" value="Genomic_DNA"/>
</dbReference>
<dbReference type="SMR" id="A6QH94"/>
<dbReference type="KEGG" id="sae:NWMN_1454"/>
<dbReference type="HOGENOM" id="CLU_190949_0_2_9"/>
<dbReference type="Proteomes" id="UP000006386">
    <property type="component" value="Chromosome"/>
</dbReference>
<dbReference type="GO" id="GO:0005737">
    <property type="term" value="C:cytoplasm"/>
    <property type="evidence" value="ECO:0007669"/>
    <property type="project" value="UniProtKB-ARBA"/>
</dbReference>
<dbReference type="GO" id="GO:1990904">
    <property type="term" value="C:ribonucleoprotein complex"/>
    <property type="evidence" value="ECO:0007669"/>
    <property type="project" value="UniProtKB-KW"/>
</dbReference>
<dbReference type="GO" id="GO:0005840">
    <property type="term" value="C:ribosome"/>
    <property type="evidence" value="ECO:0007669"/>
    <property type="project" value="UniProtKB-KW"/>
</dbReference>
<dbReference type="GO" id="GO:0003735">
    <property type="term" value="F:structural constituent of ribosome"/>
    <property type="evidence" value="ECO:0007669"/>
    <property type="project" value="InterPro"/>
</dbReference>
<dbReference type="GO" id="GO:0006412">
    <property type="term" value="P:translation"/>
    <property type="evidence" value="ECO:0007669"/>
    <property type="project" value="UniProtKB-UniRule"/>
</dbReference>
<dbReference type="Gene3D" id="2.20.28.120">
    <property type="entry name" value="Ribosomal protein L33"/>
    <property type="match status" value="1"/>
</dbReference>
<dbReference type="HAMAP" id="MF_00294">
    <property type="entry name" value="Ribosomal_bL33"/>
    <property type="match status" value="1"/>
</dbReference>
<dbReference type="InterPro" id="IPR001705">
    <property type="entry name" value="Ribosomal_bL33"/>
</dbReference>
<dbReference type="InterPro" id="IPR018264">
    <property type="entry name" value="Ribosomal_bL33_CS"/>
</dbReference>
<dbReference type="InterPro" id="IPR038584">
    <property type="entry name" value="Ribosomal_bL33_sf"/>
</dbReference>
<dbReference type="InterPro" id="IPR011332">
    <property type="entry name" value="Ribosomal_zn-bd"/>
</dbReference>
<dbReference type="NCBIfam" id="NF001764">
    <property type="entry name" value="PRK00504.1"/>
    <property type="match status" value="1"/>
</dbReference>
<dbReference type="NCBIfam" id="NF001860">
    <property type="entry name" value="PRK00595.1"/>
    <property type="match status" value="1"/>
</dbReference>
<dbReference type="NCBIfam" id="TIGR01023">
    <property type="entry name" value="rpmG_bact"/>
    <property type="match status" value="1"/>
</dbReference>
<dbReference type="PANTHER" id="PTHR43168">
    <property type="entry name" value="50S RIBOSOMAL PROTEIN L33, CHLOROPLASTIC"/>
    <property type="match status" value="1"/>
</dbReference>
<dbReference type="PANTHER" id="PTHR43168:SF2">
    <property type="entry name" value="LARGE RIBOSOMAL SUBUNIT PROTEIN BL33C"/>
    <property type="match status" value="1"/>
</dbReference>
<dbReference type="Pfam" id="PF00471">
    <property type="entry name" value="Ribosomal_L33"/>
    <property type="match status" value="1"/>
</dbReference>
<dbReference type="SUPFAM" id="SSF57829">
    <property type="entry name" value="Zn-binding ribosomal proteins"/>
    <property type="match status" value="1"/>
</dbReference>
<dbReference type="PROSITE" id="PS00582">
    <property type="entry name" value="RIBOSOMAL_L33"/>
    <property type="match status" value="1"/>
</dbReference>
<keyword id="KW-0687">Ribonucleoprotein</keyword>
<keyword id="KW-0689">Ribosomal protein</keyword>
<protein>
    <recommendedName>
        <fullName evidence="1">Large ribosomal subunit protein bL33C</fullName>
    </recommendedName>
    <alternativeName>
        <fullName evidence="1">50S ribosomal protein L33 3</fullName>
    </alternativeName>
</protein>
<accession>A6QH94</accession>
<comment type="similarity">
    <text evidence="1">Belongs to the bacterial ribosomal protein bL33 family.</text>
</comment>
<organism>
    <name type="scientific">Staphylococcus aureus (strain Newman)</name>
    <dbReference type="NCBI Taxonomy" id="426430"/>
    <lineage>
        <taxon>Bacteria</taxon>
        <taxon>Bacillati</taxon>
        <taxon>Bacillota</taxon>
        <taxon>Bacilli</taxon>
        <taxon>Bacillales</taxon>
        <taxon>Staphylococcaceae</taxon>
        <taxon>Staphylococcus</taxon>
    </lineage>
</organism>
<feature type="chain" id="PRO_0000356691" description="Large ribosomal subunit protein bL33C">
    <location>
        <begin position="1"/>
        <end position="49"/>
    </location>
</feature>
<reference key="1">
    <citation type="journal article" date="2008" name="J. Bacteriol.">
        <title>Genome sequence of Staphylococcus aureus strain Newman and comparative analysis of staphylococcal genomes: polymorphism and evolution of two major pathogenicity islands.</title>
        <authorList>
            <person name="Baba T."/>
            <person name="Bae T."/>
            <person name="Schneewind O."/>
            <person name="Takeuchi F."/>
            <person name="Hiramatsu K."/>
        </authorList>
    </citation>
    <scope>NUCLEOTIDE SEQUENCE [LARGE SCALE GENOMIC DNA]</scope>
    <source>
        <strain>Newman</strain>
    </source>
</reference>
<evidence type="ECO:0000255" key="1">
    <source>
        <dbReference type="HAMAP-Rule" id="MF_00294"/>
    </source>
</evidence>
<name>RL333_STAAE</name>